<gene>
    <name type="ordered locus">CPF_1668</name>
</gene>
<reference key="1">
    <citation type="journal article" date="2006" name="Genome Res.">
        <title>Skewed genomic variability in strains of the toxigenic bacterial pathogen, Clostridium perfringens.</title>
        <authorList>
            <person name="Myers G.S.A."/>
            <person name="Rasko D.A."/>
            <person name="Cheung J.K."/>
            <person name="Ravel J."/>
            <person name="Seshadri R."/>
            <person name="DeBoy R.T."/>
            <person name="Ren Q."/>
            <person name="Varga J."/>
            <person name="Awad M.M."/>
            <person name="Brinkac L.M."/>
            <person name="Daugherty S.C."/>
            <person name="Haft D.H."/>
            <person name="Dodson R.J."/>
            <person name="Madupu R."/>
            <person name="Nelson W.C."/>
            <person name="Rosovitz M.J."/>
            <person name="Sullivan S.A."/>
            <person name="Khouri H."/>
            <person name="Dimitrov G.I."/>
            <person name="Watkins K.L."/>
            <person name="Mulligan S."/>
            <person name="Benton J."/>
            <person name="Radune D."/>
            <person name="Fisher D.J."/>
            <person name="Atkins H.S."/>
            <person name="Hiscox T."/>
            <person name="Jost B.H."/>
            <person name="Billington S.J."/>
            <person name="Songer J.G."/>
            <person name="McClane B.A."/>
            <person name="Titball R.W."/>
            <person name="Rood J.I."/>
            <person name="Melville S.B."/>
            <person name="Paulsen I.T."/>
        </authorList>
    </citation>
    <scope>NUCLEOTIDE SEQUENCE [LARGE SCALE GENOMIC DNA]</scope>
    <source>
        <strain>ATCC 13124 / DSM 756 / JCM 1290 / NCIMB 6125 / NCTC 8237 / S 107 / Type A</strain>
    </source>
</reference>
<sequence>MEGNLLVIDKRVLPEVFEKVINAKRLLKEGKVKEITEAAKQAGISRSVYYKYKDYIFEFAETLQGRKVIFNMVVTHEKGVLSSVLNILSDVGGNILTIDQGLPIHGLAHVSFTIDISTMKCDIKEMLNEIELVHGVEKVEFVAME</sequence>
<accession>Q0TQI3</accession>
<proteinExistence type="inferred from homology"/>
<comment type="similarity">
    <text evidence="1">Belongs to the UPF0735 family.</text>
</comment>
<feature type="chain" id="PRO_0000366307" description="UPF0735 ACT domain-containing protein CPF_1668">
    <location>
        <begin position="1"/>
        <end position="145"/>
    </location>
</feature>
<feature type="domain" description="ACT" evidence="1">
    <location>
        <begin position="69"/>
        <end position="144"/>
    </location>
</feature>
<name>Y1668_CLOP1</name>
<evidence type="ECO:0000255" key="1">
    <source>
        <dbReference type="HAMAP-Rule" id="MF_00707"/>
    </source>
</evidence>
<protein>
    <recommendedName>
        <fullName evidence="1">UPF0735 ACT domain-containing protein CPF_1668</fullName>
    </recommendedName>
</protein>
<dbReference type="EMBL" id="CP000246">
    <property type="protein sequence ID" value="ABG83584.1"/>
    <property type="molecule type" value="Genomic_DNA"/>
</dbReference>
<dbReference type="RefSeq" id="WP_003454663.1">
    <property type="nucleotide sequence ID" value="NC_008261.1"/>
</dbReference>
<dbReference type="STRING" id="195103.CPF_1668"/>
<dbReference type="PaxDb" id="195103-CPF_1668"/>
<dbReference type="KEGG" id="cpf:CPF_1668"/>
<dbReference type="eggNOG" id="COG4492">
    <property type="taxonomic scope" value="Bacteria"/>
</dbReference>
<dbReference type="HOGENOM" id="CLU_128147_0_0_9"/>
<dbReference type="Proteomes" id="UP000001823">
    <property type="component" value="Chromosome"/>
</dbReference>
<dbReference type="CDD" id="cd04888">
    <property type="entry name" value="ACT_PheB-BS"/>
    <property type="match status" value="1"/>
</dbReference>
<dbReference type="Gene3D" id="3.30.70.260">
    <property type="match status" value="1"/>
</dbReference>
<dbReference type="HAMAP" id="MF_00707">
    <property type="entry name" value="UPF0735"/>
    <property type="match status" value="1"/>
</dbReference>
<dbReference type="InterPro" id="IPR045865">
    <property type="entry name" value="ACT-like_dom_sf"/>
</dbReference>
<dbReference type="InterPro" id="IPR002912">
    <property type="entry name" value="ACT_dom"/>
</dbReference>
<dbReference type="InterPro" id="IPR008310">
    <property type="entry name" value="UPF0735_ACT_dom-cont"/>
</dbReference>
<dbReference type="NCBIfam" id="NF003361">
    <property type="entry name" value="PRK04435.1"/>
    <property type="match status" value="1"/>
</dbReference>
<dbReference type="PIRSF" id="PIRSF025624">
    <property type="entry name" value="ACT_PheB"/>
    <property type="match status" value="1"/>
</dbReference>
<dbReference type="SUPFAM" id="SSF55021">
    <property type="entry name" value="ACT-like"/>
    <property type="match status" value="1"/>
</dbReference>
<dbReference type="PROSITE" id="PS51671">
    <property type="entry name" value="ACT"/>
    <property type="match status" value="1"/>
</dbReference>
<organism>
    <name type="scientific">Clostridium perfringens (strain ATCC 13124 / DSM 756 / JCM 1290 / NCIMB 6125 / NCTC 8237 / Type A)</name>
    <dbReference type="NCBI Taxonomy" id="195103"/>
    <lineage>
        <taxon>Bacteria</taxon>
        <taxon>Bacillati</taxon>
        <taxon>Bacillota</taxon>
        <taxon>Clostridia</taxon>
        <taxon>Eubacteriales</taxon>
        <taxon>Clostridiaceae</taxon>
        <taxon>Clostridium</taxon>
    </lineage>
</organism>